<sequence>MGGELVTGLGALRRRKRLLEQEKRVAGWALVLAGTGIGLMVLHAEMLWFLGCKWVLYLLLVKCLITLSTAFLLCLIVVFHAKEVQLFMTDNGLRDWRVALTRRQVAQILLELLVCGVHPVPLRSPHCTLAGEATDSQAWPGFLGEGEALLSLAMLLRLYLVPRAVLLRSGVLLNASYRSIGALNQVRFRHWFVAKLYMNTHPGRLLLGLTLGLWLTTAWVLSVAERQAVNATGHLTDTLWLIPITFLTIGYGDVVPGTLWGKIVCLCTGVMGVCCTALLVAVVARKLEFNKAEKHVHNFMMDIHYAKEMKESAARLLQEAWMYYKHTRRKDSRAARRHQRKMLAAIHTFRQVRLKHRKLREQVNSMVDISKMHMILCDLQLGLSASHLALEKRIDGLAGKLDALTELLSTALQQQQPPEPIQEAT</sequence>
<reference key="1">
    <citation type="journal article" date="1999" name="Circ. Res.">
        <title>Molecular cloning and characterization of the intermediate-conductance Ca(2+)-activated K(+) channel in vascular smooth muscle: relationship between K(Ca) channel diversity and smooth muscle cell function.</title>
        <authorList>
            <person name="Neylon C."/>
            <person name="Lang R.J."/>
            <person name="Fu Y."/>
            <person name="Bobik A."/>
            <person name="Reinhart P.H."/>
        </authorList>
    </citation>
    <scope>NUCLEOTIDE SEQUENCE [MRNA]</scope>
    <scope>FUNCTION</scope>
    <scope>TRANSPORTER ACTIVITY</scope>
    <source>
        <strain>Wistar Kyoto</strain>
        <tissue>Aortic smooth muscle</tissue>
    </source>
</reference>
<reference key="2">
    <citation type="journal article" date="1999" name="Pflugers Arch.">
        <title>Molecular and functional characterization of the small Ca2+-regulated K+ channel (rSK4) of colonic crypts.</title>
        <authorList>
            <person name="Warth R."/>
            <person name="Hamm K."/>
            <person name="Bleich M."/>
            <person name="Kunzelmann K."/>
            <person name="von Hahn T."/>
            <person name="Schreiber R."/>
            <person name="Ullrich E."/>
            <person name="Mengel M."/>
            <person name="Trautmann N."/>
            <person name="Kindle P."/>
            <person name="Schwab A."/>
            <person name="Greger R."/>
        </authorList>
    </citation>
    <scope>NUCLEOTIDE SEQUENCE [MRNA]</scope>
    <source>
        <strain>Wistar</strain>
        <tissue>Colon</tissue>
    </source>
</reference>
<reference key="3">
    <citation type="submission" date="1999-05" db="EMBL/GenBank/DDBJ databases">
        <title>Rat intermediate conductance calcium-activated potassium channel.</title>
        <authorList>
            <person name="Fujiwara Y."/>
            <person name="Saito T."/>
            <person name="Sasamura R."/>
            <person name="Miura M."/>
        </authorList>
    </citation>
    <scope>NUCLEOTIDE SEQUENCE [MRNA]</scope>
    <source>
        <strain>Sprague-Dawley</strain>
    </source>
</reference>
<reference key="4">
    <citation type="submission" date="1999-06" db="EMBL/GenBank/DDBJ databases">
        <title>cDNA cloning of an intermediate conductance Ca2+-activated K+ channel (rIK1) and its regulation by dietary K-depletion in rat distal colon.</title>
        <authorList>
            <person name="Rajendran V.M."/>
            <person name="Sangan P."/>
            <person name="Joiner W.J."/>
            <person name="Binder H.J."/>
        </authorList>
    </citation>
    <scope>NUCLEOTIDE SEQUENCE [MRNA]</scope>
    <source>
        <strain>Sprague-Dawley</strain>
    </source>
</reference>
<gene>
    <name evidence="9" type="primary">Kcnn4</name>
    <name type="synonym">Ik1</name>
    <name type="synonym">Sk4</name>
    <name type="synonym">Smik</name>
</gene>
<protein>
    <recommendedName>
        <fullName evidence="8">Intermediate conductance calcium-activated potassium channel protein 4</fullName>
        <shortName>SKCa 4</shortName>
        <shortName>SKCa4</shortName>
        <shortName evidence="5">rSK4</shortName>
    </recommendedName>
    <alternativeName>
        <fullName>KCa3.1</fullName>
    </alternativeName>
    <alternativeName>
        <fullName>KCa4</fullName>
    </alternativeName>
    <alternativeName>
        <fullName evidence="6">Smooth muscle intermediate-conductance KCa channel</fullName>
        <shortName evidence="6">SMIK</shortName>
    </alternativeName>
    <alternativeName>
        <fullName evidence="7">rIK1</fullName>
    </alternativeName>
</protein>
<name>KCNN4_RAT</name>
<comment type="function">
    <text evidence="2 4">Intermediate conductance calcium-activated potassium channel that mediates the voltage-independent transmembrane transfer of potassium across the cell membrane through a constitutive interaction with calmodulin which binds the intracellular calcium allowing its opening (PubMed:10532960). The current is characterized by a voltage-independent activation, an intracellular calcium concentration increase-dependent activation and a single-channel conductance of about 25 picosiemens (PubMed:10532960). Also presents an inwardly rectifying current, thus reducing its already small outward conductance of potassium ions, which is particularly the case when the membrane potential displays positive values, above + 20 mV (By similarity). Controls calcium influx during vascular contractility by being responsible of membrane hyperpolarization induced by vasoactive factors in proliferative vascular smooth muscle cell types (PubMed:10532960). Following calcium influx, the consecutive activation of KCNN4 channel leads to a hyperpolarization of the cell membrane potential and hence an increase of the electrical driving force for further calcium influx promoting sustained calcium entry in response to stimulation with chemotactic peptides. Required for maximal calcium influx and proliferation during the reactivation of naive T-cells (By similarity). Plays a role in the late stages of EGF-induced macropinocytosis through activation by PI(3)P (By similarity).</text>
</comment>
<comment type="catalytic activity">
    <reaction evidence="4">
        <text>K(+)(in) = K(+)(out)</text>
        <dbReference type="Rhea" id="RHEA:29463"/>
        <dbReference type="ChEBI" id="CHEBI:29103"/>
    </reaction>
</comment>
<comment type="subunit">
    <text evidence="2">Homodimer. Homotetramer. Heterotetramer of potassium channel proteins. Interacts with MTMR6; this interaction leads to selective dephosphorylation of PI(3)P in a lipid microdomain adjacent to KCNN4, resulting in a decrease of intermediate conductance calcium-activated potassium channel activity. Interacts (via the C-tail domain) with CALM1; the calmodulin binding is constitutive, does not require calcium and mediates calcium-dependent gating and four calmodulin molecules bind to one channel tetramer.</text>
</comment>
<comment type="subcellular location">
    <subcellularLocation>
        <location evidence="2">Cell membrane</location>
        <topology evidence="3">Multi-pass membrane protein</topology>
    </subcellularLocation>
    <subcellularLocation>
        <location evidence="2">Cell projection</location>
        <location evidence="2">Ruffle membrane</location>
    </subcellularLocation>
    <text evidence="2">Targeted to membrane ruffles after EGF stimulation.</text>
</comment>
<comment type="domain">
    <text evidence="2">Transmembrane helices S5 and S6 form the ion channel pore, which is surrounded bymembrane embedded helices S1 to S4. The S4-S5 linker, which contains two distinct helices, undergoes conformational changes upon calmodulin binding to open the channel pore.</text>
</comment>
<comment type="PTM">
    <text evidence="2">Phosphorylation at His-356 by NDKB activates the intermediate conductance calcium-activated potassium channel activity, and conversely it's dephosphorylation by PHPT1 inhibits this activity.</text>
</comment>
<comment type="similarity">
    <text evidence="8">Belongs to the potassium channel KCNN family. KCa3.1/KCNN4 subfamily.</text>
</comment>
<organism>
    <name type="scientific">Rattus norvegicus</name>
    <name type="common">Rat</name>
    <dbReference type="NCBI Taxonomy" id="10116"/>
    <lineage>
        <taxon>Eukaryota</taxon>
        <taxon>Metazoa</taxon>
        <taxon>Chordata</taxon>
        <taxon>Craniata</taxon>
        <taxon>Vertebrata</taxon>
        <taxon>Euteleostomi</taxon>
        <taxon>Mammalia</taxon>
        <taxon>Eutheria</taxon>
        <taxon>Euarchontoglires</taxon>
        <taxon>Glires</taxon>
        <taxon>Rodentia</taxon>
        <taxon>Myomorpha</taxon>
        <taxon>Muroidea</taxon>
        <taxon>Muridae</taxon>
        <taxon>Murinae</taxon>
        <taxon>Rattus</taxon>
    </lineage>
</organism>
<feature type="chain" id="PRO_0000155019" description="Intermediate conductance calcium-activated potassium channel protein 4">
    <location>
        <begin position="1"/>
        <end position="425"/>
    </location>
</feature>
<feature type="transmembrane region" description="Helical; Name=Segment S1" evidence="3">
    <location>
        <begin position="30"/>
        <end position="50"/>
    </location>
</feature>
<feature type="transmembrane region" description="Helical; Name=Segment S2" evidence="3">
    <location>
        <begin position="59"/>
        <end position="79"/>
    </location>
</feature>
<feature type="transmembrane region" description="Helical; Name=Segment S3" evidence="3">
    <location>
        <begin position="105"/>
        <end position="121"/>
    </location>
</feature>
<feature type="transmembrane region" description="Helical; Name=Segment S4" evidence="3">
    <location>
        <begin position="141"/>
        <end position="161"/>
    </location>
</feature>
<feature type="transmembrane region" description="Helical; Name=Segment S5" evidence="3">
    <location>
        <begin position="205"/>
        <end position="225"/>
    </location>
</feature>
<feature type="intramembrane region" description="Pore-forming; Name=Segment H5" evidence="3">
    <location>
        <begin position="239"/>
        <end position="259"/>
    </location>
</feature>
<feature type="transmembrane region" description="Helical; Name=Segment S6" evidence="3">
    <location>
        <begin position="263"/>
        <end position="283"/>
    </location>
</feature>
<feature type="region of interest" description="Calmodulin-binding" evidence="1">
    <location>
        <begin position="284"/>
        <end position="345"/>
    </location>
</feature>
<feature type="modified residue" description="Phosphohistidine" evidence="2">
    <location>
        <position position="356"/>
    </location>
</feature>
<feature type="sequence conflict" description="In Ref. 2; CAB40141." evidence="8" ref="2">
    <original>L</original>
    <variation>F</variation>
    <location>
        <position position="213"/>
    </location>
</feature>
<feature type="sequence conflict" description="In Ref. 4; AAD38205." evidence="8" ref="4">
    <original>V</original>
    <variation>L</variation>
    <location>
        <position position="280"/>
    </location>
</feature>
<feature type="sequence conflict" description="In Ref. 4; AAD38205." evidence="8" ref="4">
    <original>D</original>
    <variation>H</variation>
    <location>
        <position position="395"/>
    </location>
</feature>
<feature type="sequence conflict" description="In Ref. 4; AAD38205." evidence="8" ref="4">
    <original>G</original>
    <variation>R</variation>
    <location>
        <position position="399"/>
    </location>
</feature>
<feature type="sequence conflict" description="In Ref. 4; AAD38205." evidence="8" ref="4">
    <original>T</original>
    <variation>S</variation>
    <location>
        <position position="410"/>
    </location>
</feature>
<feature type="sequence conflict" description="In Ref. 4; AAD38205." evidence="8" ref="4">
    <location>
        <position position="416"/>
    </location>
</feature>
<accession>Q9QYW1</accession>
<accession>Q9R198</accession>
<accession>Q9WVA5</accession>
<proteinExistence type="evidence at transcript level"/>
<dbReference type="EMBL" id="AF190458">
    <property type="protein sequence ID" value="AAF05602.1"/>
    <property type="molecule type" value="mRNA"/>
</dbReference>
<dbReference type="EMBL" id="AJ133438">
    <property type="protein sequence ID" value="CAB40141.2"/>
    <property type="molecule type" value="mRNA"/>
</dbReference>
<dbReference type="EMBL" id="AF149250">
    <property type="protein sequence ID" value="AAD38032.1"/>
    <property type="molecule type" value="mRNA"/>
</dbReference>
<dbReference type="EMBL" id="AF156554">
    <property type="protein sequence ID" value="AAD38205.1"/>
    <property type="molecule type" value="mRNA"/>
</dbReference>
<dbReference type="SMR" id="Q9QYW1"/>
<dbReference type="FunCoup" id="Q9QYW1">
    <property type="interactions" value="22"/>
</dbReference>
<dbReference type="STRING" id="10116.ENSRNOP00000026489"/>
<dbReference type="BindingDB" id="Q9QYW1"/>
<dbReference type="iPTMnet" id="Q9QYW1"/>
<dbReference type="PhosphoSitePlus" id="Q9QYW1"/>
<dbReference type="PaxDb" id="10116-ENSRNOP00000026489"/>
<dbReference type="UCSC" id="RGD:621476">
    <property type="organism name" value="rat"/>
</dbReference>
<dbReference type="AGR" id="RGD:621476"/>
<dbReference type="RGD" id="621476">
    <property type="gene designation" value="Kcnn4"/>
</dbReference>
<dbReference type="eggNOG" id="KOG3684">
    <property type="taxonomic scope" value="Eukaryota"/>
</dbReference>
<dbReference type="InParanoid" id="Q9QYW1"/>
<dbReference type="OrthoDB" id="73653at2759"/>
<dbReference type="PhylomeDB" id="Q9QYW1"/>
<dbReference type="Reactome" id="R-RNO-1296052">
    <property type="pathway name" value="Ca2+ activated K+ channels"/>
</dbReference>
<dbReference type="PRO" id="PR:Q9QYW1"/>
<dbReference type="Proteomes" id="UP000002494">
    <property type="component" value="Unplaced"/>
</dbReference>
<dbReference type="GO" id="GO:0016324">
    <property type="term" value="C:apical plasma membrane"/>
    <property type="evidence" value="ECO:0000314"/>
    <property type="project" value="RGD"/>
</dbReference>
<dbReference type="GO" id="GO:0016323">
    <property type="term" value="C:basolateral plasma membrane"/>
    <property type="evidence" value="ECO:0000314"/>
    <property type="project" value="RGD"/>
</dbReference>
<dbReference type="GO" id="GO:0043005">
    <property type="term" value="C:neuron projection"/>
    <property type="evidence" value="ECO:0000318"/>
    <property type="project" value="GO_Central"/>
</dbReference>
<dbReference type="GO" id="GO:0043025">
    <property type="term" value="C:neuronal cell body"/>
    <property type="evidence" value="ECO:0000314"/>
    <property type="project" value="RGD"/>
</dbReference>
<dbReference type="GO" id="GO:0005886">
    <property type="term" value="C:plasma membrane"/>
    <property type="evidence" value="ECO:0000266"/>
    <property type="project" value="RGD"/>
</dbReference>
<dbReference type="GO" id="GO:0032587">
    <property type="term" value="C:ruffle membrane"/>
    <property type="evidence" value="ECO:0000266"/>
    <property type="project" value="RGD"/>
</dbReference>
<dbReference type="GO" id="GO:0031982">
    <property type="term" value="C:vesicle"/>
    <property type="evidence" value="ECO:0000266"/>
    <property type="project" value="RGD"/>
</dbReference>
<dbReference type="GO" id="GO:0015269">
    <property type="term" value="F:calcium-activated potassium channel activity"/>
    <property type="evidence" value="ECO:0000266"/>
    <property type="project" value="RGD"/>
</dbReference>
<dbReference type="GO" id="GO:0005516">
    <property type="term" value="F:calmodulin binding"/>
    <property type="evidence" value="ECO:0000266"/>
    <property type="project" value="RGD"/>
</dbReference>
<dbReference type="GO" id="GO:0022894">
    <property type="term" value="F:intermediate conductance calcium-activated potassium channel activity"/>
    <property type="evidence" value="ECO:0000314"/>
    <property type="project" value="RGD"/>
</dbReference>
<dbReference type="GO" id="GO:0005242">
    <property type="term" value="F:inward rectifier potassium channel activity"/>
    <property type="evidence" value="ECO:0000314"/>
    <property type="project" value="RGD"/>
</dbReference>
<dbReference type="GO" id="GO:0005267">
    <property type="term" value="F:potassium channel activity"/>
    <property type="evidence" value="ECO:0000266"/>
    <property type="project" value="RGD"/>
</dbReference>
<dbReference type="GO" id="GO:0042803">
    <property type="term" value="F:protein homodimerization activity"/>
    <property type="evidence" value="ECO:0000266"/>
    <property type="project" value="RGD"/>
</dbReference>
<dbReference type="GO" id="GO:0019903">
    <property type="term" value="F:protein phosphatase binding"/>
    <property type="evidence" value="ECO:0000266"/>
    <property type="project" value="RGD"/>
</dbReference>
<dbReference type="GO" id="GO:0016286">
    <property type="term" value="F:small conductance calcium-activated potassium channel activity"/>
    <property type="evidence" value="ECO:0007669"/>
    <property type="project" value="InterPro"/>
</dbReference>
<dbReference type="GO" id="GO:0006816">
    <property type="term" value="P:calcium ion transport"/>
    <property type="evidence" value="ECO:0000266"/>
    <property type="project" value="RGD"/>
</dbReference>
<dbReference type="GO" id="GO:0003300">
    <property type="term" value="P:cardiac muscle hypertrophy"/>
    <property type="evidence" value="ECO:0000315"/>
    <property type="project" value="RGD"/>
</dbReference>
<dbReference type="GO" id="GO:0006884">
    <property type="term" value="P:cell volume homeostasis"/>
    <property type="evidence" value="ECO:0000266"/>
    <property type="project" value="RGD"/>
</dbReference>
<dbReference type="GO" id="GO:0071456">
    <property type="term" value="P:cellular response to hypoxia"/>
    <property type="evidence" value="ECO:0000270"/>
    <property type="project" value="RGD"/>
</dbReference>
<dbReference type="GO" id="GO:0051649">
    <property type="term" value="P:establishment of localization in cell"/>
    <property type="evidence" value="ECO:0000266"/>
    <property type="project" value="RGD"/>
</dbReference>
<dbReference type="GO" id="GO:0097284">
    <property type="term" value="P:hepatocyte apoptotic process"/>
    <property type="evidence" value="ECO:0000315"/>
    <property type="project" value="RGD"/>
</dbReference>
<dbReference type="GO" id="GO:0044351">
    <property type="term" value="P:macropinocytosis"/>
    <property type="evidence" value="ECO:0000266"/>
    <property type="project" value="RGD"/>
</dbReference>
<dbReference type="GO" id="GO:0006820">
    <property type="term" value="P:monoatomic anion transport"/>
    <property type="evidence" value="ECO:0000314"/>
    <property type="project" value="RGD"/>
</dbReference>
<dbReference type="GO" id="GO:0071674">
    <property type="term" value="P:mononuclear cell migration"/>
    <property type="evidence" value="ECO:0000315"/>
    <property type="project" value="RGD"/>
</dbReference>
<dbReference type="GO" id="GO:0010614">
    <property type="term" value="P:negative regulation of cardiac muscle hypertrophy"/>
    <property type="evidence" value="ECO:0000315"/>
    <property type="project" value="RGD"/>
</dbReference>
<dbReference type="GO" id="GO:0045794">
    <property type="term" value="P:negative regulation of cell volume"/>
    <property type="evidence" value="ECO:0000315"/>
    <property type="project" value="RGD"/>
</dbReference>
<dbReference type="GO" id="GO:1904898">
    <property type="term" value="P:negative regulation of hepatic stellate cell proliferation"/>
    <property type="evidence" value="ECO:0000315"/>
    <property type="project" value="RGD"/>
</dbReference>
<dbReference type="GO" id="GO:0045332">
    <property type="term" value="P:phospholipid translocation"/>
    <property type="evidence" value="ECO:0000266"/>
    <property type="project" value="RGD"/>
</dbReference>
<dbReference type="GO" id="GO:0070318">
    <property type="term" value="P:positive regulation of G0 to G1 transition"/>
    <property type="evidence" value="ECO:0000315"/>
    <property type="project" value="RGD"/>
</dbReference>
<dbReference type="GO" id="GO:1903980">
    <property type="term" value="P:positive regulation of microglial cell activation"/>
    <property type="evidence" value="ECO:0000315"/>
    <property type="project" value="RGD"/>
</dbReference>
<dbReference type="GO" id="GO:1900745">
    <property type="term" value="P:positive regulation of p38MAPK cascade"/>
    <property type="evidence" value="ECO:0000315"/>
    <property type="project" value="RGD"/>
</dbReference>
<dbReference type="GO" id="GO:0050714">
    <property type="term" value="P:positive regulation of protein secretion"/>
    <property type="evidence" value="ECO:0000266"/>
    <property type="project" value="RGD"/>
</dbReference>
<dbReference type="GO" id="GO:0048661">
    <property type="term" value="P:positive regulation of smooth muscle cell proliferation"/>
    <property type="evidence" value="ECO:0000315"/>
    <property type="project" value="RGD"/>
</dbReference>
<dbReference type="GO" id="GO:0050862">
    <property type="term" value="P:positive regulation of T cell receptor signaling pathway"/>
    <property type="evidence" value="ECO:0000266"/>
    <property type="project" value="RGD"/>
</dbReference>
<dbReference type="GO" id="GO:0097623">
    <property type="term" value="P:potassium ion export across plasma membrane"/>
    <property type="evidence" value="ECO:0000314"/>
    <property type="project" value="RGD"/>
</dbReference>
<dbReference type="GO" id="GO:0071805">
    <property type="term" value="P:potassium ion transmembrane transport"/>
    <property type="evidence" value="ECO:0000314"/>
    <property type="project" value="UniProtKB"/>
</dbReference>
<dbReference type="GO" id="GO:0006813">
    <property type="term" value="P:potassium ion transport"/>
    <property type="evidence" value="ECO:0000314"/>
    <property type="project" value="RGD"/>
</dbReference>
<dbReference type="GO" id="GO:0051289">
    <property type="term" value="P:protein homotetramerization"/>
    <property type="evidence" value="ECO:0000266"/>
    <property type="project" value="RGD"/>
</dbReference>
<dbReference type="GO" id="GO:0002002">
    <property type="term" value="P:regulation of angiotensin levels in blood"/>
    <property type="evidence" value="ECO:0000315"/>
    <property type="project" value="RGD"/>
</dbReference>
<dbReference type="GO" id="GO:1905664">
    <property type="term" value="P:regulation of calcium ion import across plasma membrane"/>
    <property type="evidence" value="ECO:0000266"/>
    <property type="project" value="RGD"/>
</dbReference>
<dbReference type="GO" id="GO:0071637">
    <property type="term" value="P:regulation of monocyte chemotactic protein-1 production"/>
    <property type="evidence" value="ECO:0000315"/>
    <property type="project" value="RGD"/>
</dbReference>
<dbReference type="GO" id="GO:1900133">
    <property type="term" value="P:regulation of renin secretion into blood stream"/>
    <property type="evidence" value="ECO:0000315"/>
    <property type="project" value="RGD"/>
</dbReference>
<dbReference type="GO" id="GO:0048660">
    <property type="term" value="P:regulation of smooth muscle cell proliferation"/>
    <property type="evidence" value="ECO:0000315"/>
    <property type="project" value="RGD"/>
</dbReference>
<dbReference type="GO" id="GO:0032680">
    <property type="term" value="P:regulation of tumor necrosis factor production"/>
    <property type="evidence" value="ECO:0000315"/>
    <property type="project" value="RGD"/>
</dbReference>
<dbReference type="GO" id="GO:0001666">
    <property type="term" value="P:response to hypoxia"/>
    <property type="evidence" value="ECO:0000270"/>
    <property type="project" value="RGD"/>
</dbReference>
<dbReference type="GO" id="GO:0032868">
    <property type="term" value="P:response to insulin"/>
    <property type="evidence" value="ECO:0000270"/>
    <property type="project" value="RGD"/>
</dbReference>
<dbReference type="GO" id="GO:1904772">
    <property type="term" value="P:response to tetrachloromethane"/>
    <property type="evidence" value="ECO:0000270"/>
    <property type="project" value="RGD"/>
</dbReference>
<dbReference type="GO" id="GO:0046541">
    <property type="term" value="P:saliva secretion"/>
    <property type="evidence" value="ECO:0000266"/>
    <property type="project" value="RGD"/>
</dbReference>
<dbReference type="GO" id="GO:0030322">
    <property type="term" value="P:stabilization of membrane potential"/>
    <property type="evidence" value="ECO:0000266"/>
    <property type="project" value="RGD"/>
</dbReference>
<dbReference type="GO" id="GO:1904738">
    <property type="term" value="P:vascular associated smooth muscle cell migration"/>
    <property type="evidence" value="ECO:0000315"/>
    <property type="project" value="RGD"/>
</dbReference>
<dbReference type="GO" id="GO:1990874">
    <property type="term" value="P:vascular associated smooth muscle cell proliferation"/>
    <property type="evidence" value="ECO:0000270"/>
    <property type="project" value="RGD"/>
</dbReference>
<dbReference type="FunFam" id="1.10.287.70:FF:000088">
    <property type="entry name" value="Intermediate conductance calcium-activated potassium channel protein 4"/>
    <property type="match status" value="1"/>
</dbReference>
<dbReference type="FunFam" id="1.10.287.70:FF:000160">
    <property type="entry name" value="Potassium calcium-activated channel subfamily N member 4"/>
    <property type="match status" value="1"/>
</dbReference>
<dbReference type="Gene3D" id="1.10.287.70">
    <property type="match status" value="2"/>
</dbReference>
<dbReference type="InterPro" id="IPR004178">
    <property type="entry name" value="CaM-bd_dom"/>
</dbReference>
<dbReference type="InterPro" id="IPR036122">
    <property type="entry name" value="CaM-bd_dom_sf"/>
</dbReference>
<dbReference type="InterPro" id="IPR015449">
    <property type="entry name" value="K_chnl_Ca-activ_SK"/>
</dbReference>
<dbReference type="InterPro" id="IPR013099">
    <property type="entry name" value="K_chnl_dom"/>
</dbReference>
<dbReference type="PANTHER" id="PTHR10153">
    <property type="entry name" value="SMALL CONDUCTANCE CALCIUM-ACTIVATED POTASSIUM CHANNEL"/>
    <property type="match status" value="1"/>
</dbReference>
<dbReference type="Pfam" id="PF02888">
    <property type="entry name" value="CaMBD"/>
    <property type="match status" value="1"/>
</dbReference>
<dbReference type="Pfam" id="PF07885">
    <property type="entry name" value="Ion_trans_2"/>
    <property type="match status" value="1"/>
</dbReference>
<dbReference type="Pfam" id="PF03530">
    <property type="entry name" value="SK_channel"/>
    <property type="match status" value="1"/>
</dbReference>
<dbReference type="SMART" id="SM01053">
    <property type="entry name" value="CaMBD"/>
    <property type="match status" value="1"/>
</dbReference>
<dbReference type="SUPFAM" id="SSF81327">
    <property type="entry name" value="Small-conductance potassium channel"/>
    <property type="match status" value="1"/>
</dbReference>
<dbReference type="SUPFAM" id="SSF81324">
    <property type="entry name" value="Voltage-gated potassium channels"/>
    <property type="match status" value="1"/>
</dbReference>
<keyword id="KW-0112">Calmodulin-binding</keyword>
<keyword id="KW-1003">Cell membrane</keyword>
<keyword id="KW-0966">Cell projection</keyword>
<keyword id="KW-0391">Immunity</keyword>
<keyword id="KW-0407">Ion channel</keyword>
<keyword id="KW-0406">Ion transport</keyword>
<keyword id="KW-0472">Membrane</keyword>
<keyword id="KW-0597">Phosphoprotein</keyword>
<keyword id="KW-1185">Reference proteome</keyword>
<keyword id="KW-0812">Transmembrane</keyword>
<keyword id="KW-1133">Transmembrane helix</keyword>
<keyword id="KW-0813">Transport</keyword>
<evidence type="ECO:0000250" key="1"/>
<evidence type="ECO:0000250" key="2">
    <source>
        <dbReference type="UniProtKB" id="O15554"/>
    </source>
</evidence>
<evidence type="ECO:0000255" key="3"/>
<evidence type="ECO:0000269" key="4">
    <source>
    </source>
</evidence>
<evidence type="ECO:0000303" key="5">
    <source>
    </source>
</evidence>
<evidence type="ECO:0000303" key="6">
    <source>
    </source>
</evidence>
<evidence type="ECO:0000303" key="7">
    <source ref="4"/>
</evidence>
<evidence type="ECO:0000305" key="8"/>
<evidence type="ECO:0000312" key="9">
    <source>
        <dbReference type="RGD" id="621476"/>
    </source>
</evidence>